<dbReference type="EC" id="2.3.1.286" evidence="1 2"/>
<dbReference type="EMBL" id="AE016825">
    <property type="protein sequence ID" value="AAQ57973.1"/>
    <property type="molecule type" value="Genomic_DNA"/>
</dbReference>
<dbReference type="RefSeq" id="WP_011133849.1">
    <property type="nucleotide sequence ID" value="NC_005085.1"/>
</dbReference>
<dbReference type="SMR" id="Q7P1B9"/>
<dbReference type="STRING" id="243365.CV_0294"/>
<dbReference type="KEGG" id="cvi:CV_0294"/>
<dbReference type="eggNOG" id="COG0846">
    <property type="taxonomic scope" value="Bacteria"/>
</dbReference>
<dbReference type="HOGENOM" id="CLU_023643_3_0_4"/>
<dbReference type="OrthoDB" id="9800582at2"/>
<dbReference type="Proteomes" id="UP000001424">
    <property type="component" value="Chromosome"/>
</dbReference>
<dbReference type="GO" id="GO:0005737">
    <property type="term" value="C:cytoplasm"/>
    <property type="evidence" value="ECO:0007669"/>
    <property type="project" value="UniProtKB-SubCell"/>
</dbReference>
<dbReference type="GO" id="GO:0017136">
    <property type="term" value="F:histone deacetylase activity, NAD-dependent"/>
    <property type="evidence" value="ECO:0007669"/>
    <property type="project" value="TreeGrafter"/>
</dbReference>
<dbReference type="GO" id="GO:0070403">
    <property type="term" value="F:NAD+ binding"/>
    <property type="evidence" value="ECO:0007669"/>
    <property type="project" value="UniProtKB-UniRule"/>
</dbReference>
<dbReference type="GO" id="GO:0008270">
    <property type="term" value="F:zinc ion binding"/>
    <property type="evidence" value="ECO:0007669"/>
    <property type="project" value="UniProtKB-UniRule"/>
</dbReference>
<dbReference type="Gene3D" id="3.30.1600.10">
    <property type="entry name" value="SIR2/SIRT2 'Small Domain"/>
    <property type="match status" value="1"/>
</dbReference>
<dbReference type="Gene3D" id="3.40.50.1220">
    <property type="entry name" value="TPP-binding domain"/>
    <property type="match status" value="1"/>
</dbReference>
<dbReference type="HAMAP" id="MF_01968">
    <property type="entry name" value="Sirtuin_ClassU"/>
    <property type="match status" value="1"/>
</dbReference>
<dbReference type="InterPro" id="IPR029035">
    <property type="entry name" value="DHS-like_NAD/FAD-binding_dom"/>
</dbReference>
<dbReference type="InterPro" id="IPR050134">
    <property type="entry name" value="NAD-dep_sirtuin_deacylases"/>
</dbReference>
<dbReference type="InterPro" id="IPR003000">
    <property type="entry name" value="Sirtuin"/>
</dbReference>
<dbReference type="InterPro" id="IPR026591">
    <property type="entry name" value="Sirtuin_cat_small_dom_sf"/>
</dbReference>
<dbReference type="InterPro" id="IPR028628">
    <property type="entry name" value="Sirtuin_class_U"/>
</dbReference>
<dbReference type="InterPro" id="IPR026590">
    <property type="entry name" value="Ssirtuin_cat_dom"/>
</dbReference>
<dbReference type="NCBIfam" id="NF001754">
    <property type="entry name" value="PRK00481.1-4"/>
    <property type="match status" value="1"/>
</dbReference>
<dbReference type="PANTHER" id="PTHR11085:SF4">
    <property type="entry name" value="NAD-DEPENDENT PROTEIN DEACYLASE"/>
    <property type="match status" value="1"/>
</dbReference>
<dbReference type="PANTHER" id="PTHR11085">
    <property type="entry name" value="NAD-DEPENDENT PROTEIN DEACYLASE SIRTUIN-5, MITOCHONDRIAL-RELATED"/>
    <property type="match status" value="1"/>
</dbReference>
<dbReference type="Pfam" id="PF02146">
    <property type="entry name" value="SIR2"/>
    <property type="match status" value="1"/>
</dbReference>
<dbReference type="SUPFAM" id="SSF52467">
    <property type="entry name" value="DHS-like NAD/FAD-binding domain"/>
    <property type="match status" value="1"/>
</dbReference>
<dbReference type="PROSITE" id="PS50305">
    <property type="entry name" value="SIRTUIN"/>
    <property type="match status" value="1"/>
</dbReference>
<feature type="chain" id="PRO_0000110304" description="NAD-dependent protein deacetylase">
    <location>
        <begin position="1"/>
        <end position="244"/>
    </location>
</feature>
<feature type="domain" description="Deacetylase sirtuin-type" evidence="2">
    <location>
        <begin position="1"/>
        <end position="244"/>
    </location>
</feature>
<feature type="active site" description="Proton acceptor" evidence="2">
    <location>
        <position position="125"/>
    </location>
</feature>
<feature type="binding site" evidence="1">
    <location>
        <position position="27"/>
    </location>
    <ligand>
        <name>NAD(+)</name>
        <dbReference type="ChEBI" id="CHEBI:57540"/>
    </ligand>
</feature>
<feature type="binding site" evidence="1">
    <location>
        <position position="31"/>
    </location>
    <ligand>
        <name>NAD(+)</name>
        <dbReference type="ChEBI" id="CHEBI:57540"/>
    </ligand>
</feature>
<feature type="binding site" evidence="1">
    <location>
        <position position="38"/>
    </location>
    <ligand>
        <name>NAD(+)</name>
        <dbReference type="ChEBI" id="CHEBI:57540"/>
    </ligand>
</feature>
<feature type="binding site" evidence="1">
    <location>
        <position position="38"/>
    </location>
    <ligand>
        <name>nicotinamide</name>
        <dbReference type="ChEBI" id="CHEBI:17154"/>
    </ligand>
</feature>
<feature type="binding site" evidence="1">
    <location>
        <position position="39"/>
    </location>
    <ligand>
        <name>NAD(+)</name>
        <dbReference type="ChEBI" id="CHEBI:57540"/>
    </ligand>
</feature>
<feature type="binding site" evidence="1">
    <location>
        <position position="107"/>
    </location>
    <ligand>
        <name>NAD(+)</name>
        <dbReference type="ChEBI" id="CHEBI:57540"/>
    </ligand>
</feature>
<feature type="binding site" evidence="1">
    <location>
        <position position="109"/>
    </location>
    <ligand>
        <name>NAD(+)</name>
        <dbReference type="ChEBI" id="CHEBI:57540"/>
    </ligand>
</feature>
<feature type="binding site" evidence="1">
    <location>
        <position position="109"/>
    </location>
    <ligand>
        <name>nicotinamide</name>
        <dbReference type="ChEBI" id="CHEBI:17154"/>
    </ligand>
</feature>
<feature type="binding site" evidence="1">
    <location>
        <position position="110"/>
    </location>
    <ligand>
        <name>NAD(+)</name>
        <dbReference type="ChEBI" id="CHEBI:57540"/>
    </ligand>
</feature>
<feature type="binding site" evidence="1">
    <location>
        <position position="110"/>
    </location>
    <ligand>
        <name>nicotinamide</name>
        <dbReference type="ChEBI" id="CHEBI:17154"/>
    </ligand>
</feature>
<feature type="binding site" evidence="1">
    <location>
        <position position="125"/>
    </location>
    <ligand>
        <name>NAD(+)</name>
        <dbReference type="ChEBI" id="CHEBI:57540"/>
    </ligand>
</feature>
<feature type="binding site" evidence="1">
    <location>
        <position position="133"/>
    </location>
    <ligand>
        <name>Zn(2+)</name>
        <dbReference type="ChEBI" id="CHEBI:29105"/>
    </ligand>
</feature>
<feature type="binding site" evidence="1">
    <location>
        <position position="136"/>
    </location>
    <ligand>
        <name>Zn(2+)</name>
        <dbReference type="ChEBI" id="CHEBI:29105"/>
    </ligand>
</feature>
<feature type="binding site" evidence="1">
    <location>
        <position position="153"/>
    </location>
    <ligand>
        <name>Zn(2+)</name>
        <dbReference type="ChEBI" id="CHEBI:29105"/>
    </ligand>
</feature>
<feature type="binding site" evidence="1">
    <location>
        <position position="156"/>
    </location>
    <ligand>
        <name>Zn(2+)</name>
        <dbReference type="ChEBI" id="CHEBI:29105"/>
    </ligand>
</feature>
<feature type="binding site" evidence="1">
    <location>
        <position position="192"/>
    </location>
    <ligand>
        <name>NAD(+)</name>
        <dbReference type="ChEBI" id="CHEBI:57540"/>
    </ligand>
</feature>
<feature type="binding site" evidence="1">
    <location>
        <position position="193"/>
    </location>
    <ligand>
        <name>NAD(+)</name>
        <dbReference type="ChEBI" id="CHEBI:57540"/>
    </ligand>
</feature>
<feature type="binding site" evidence="1">
    <location>
        <position position="217"/>
    </location>
    <ligand>
        <name>NAD(+)</name>
        <dbReference type="ChEBI" id="CHEBI:57540"/>
    </ligand>
</feature>
<feature type="binding site" evidence="1">
    <location>
        <position position="235"/>
    </location>
    <ligand>
        <name>NAD(+)</name>
        <dbReference type="ChEBI" id="CHEBI:57540"/>
    </ligand>
</feature>
<organism>
    <name type="scientific">Chromobacterium violaceum (strain ATCC 12472 / DSM 30191 / JCM 1249 / CCUG 213 / NBRC 12614 / NCIMB 9131 / NCTC 9757 / MK)</name>
    <dbReference type="NCBI Taxonomy" id="243365"/>
    <lineage>
        <taxon>Bacteria</taxon>
        <taxon>Pseudomonadati</taxon>
        <taxon>Pseudomonadota</taxon>
        <taxon>Betaproteobacteria</taxon>
        <taxon>Neisseriales</taxon>
        <taxon>Chromobacteriaceae</taxon>
        <taxon>Chromobacterium</taxon>
    </lineage>
</organism>
<gene>
    <name evidence="1" type="primary">cobB</name>
    <name type="ordered locus">CV_0294</name>
</gene>
<protein>
    <recommendedName>
        <fullName evidence="1">NAD-dependent protein deacetylase</fullName>
        <ecNumber evidence="1 2">2.3.1.286</ecNumber>
    </recommendedName>
    <alternativeName>
        <fullName evidence="1">Regulatory protein SIR2 homolog</fullName>
    </alternativeName>
</protein>
<accession>Q7P1B9</accession>
<keyword id="KW-0963">Cytoplasm</keyword>
<keyword id="KW-0479">Metal-binding</keyword>
<keyword id="KW-0520">NAD</keyword>
<keyword id="KW-1185">Reference proteome</keyword>
<keyword id="KW-0808">Transferase</keyword>
<keyword id="KW-0862">Zinc</keyword>
<proteinExistence type="inferred from homology"/>
<reference key="1">
    <citation type="journal article" date="2003" name="Proc. Natl. Acad. Sci. U.S.A.">
        <title>The complete genome sequence of Chromobacterium violaceum reveals remarkable and exploitable bacterial adaptability.</title>
        <authorList>
            <person name="Vasconcelos A.T.R."/>
            <person name="de Almeida D.F."/>
            <person name="Hungria M."/>
            <person name="Guimaraes C.T."/>
            <person name="Antonio R.V."/>
            <person name="Almeida F.C."/>
            <person name="de Almeida L.G.P."/>
            <person name="de Almeida R."/>
            <person name="Alves-Gomes J.A."/>
            <person name="Andrade E.M."/>
            <person name="Araripe J."/>
            <person name="de Araujo M.F.F."/>
            <person name="Astolfi-Filho S."/>
            <person name="Azevedo V."/>
            <person name="Baptista A.J."/>
            <person name="Bataus L.A.M."/>
            <person name="Batista J.S."/>
            <person name="Belo A."/>
            <person name="van den Berg C."/>
            <person name="Bogo M."/>
            <person name="Bonatto S."/>
            <person name="Bordignon J."/>
            <person name="Brigido M.M."/>
            <person name="Brito C.A."/>
            <person name="Brocchi M."/>
            <person name="Burity H.A."/>
            <person name="Camargo A.A."/>
            <person name="Cardoso D.D.P."/>
            <person name="Carneiro N.P."/>
            <person name="Carraro D.M."/>
            <person name="Carvalho C.M.B."/>
            <person name="Cascardo J.C.M."/>
            <person name="Cavada B.S."/>
            <person name="Chueire L.M.O."/>
            <person name="Creczynski-Pasa T.B."/>
            <person name="Cunha-Junior N.C."/>
            <person name="Fagundes N."/>
            <person name="Falcao C.L."/>
            <person name="Fantinatti F."/>
            <person name="Farias I.P."/>
            <person name="Felipe M.S.S."/>
            <person name="Ferrari L.P."/>
            <person name="Ferro J.A."/>
            <person name="Ferro M.I.T."/>
            <person name="Franco G.R."/>
            <person name="Freitas N.S.A."/>
            <person name="Furlan L.R."/>
            <person name="Gazzinelli R.T."/>
            <person name="Gomes E.A."/>
            <person name="Goncalves P.R."/>
            <person name="Grangeiro T.B."/>
            <person name="Grattapaglia D."/>
            <person name="Grisard E.C."/>
            <person name="Hanna E.S."/>
            <person name="Jardim S.N."/>
            <person name="Laurino J."/>
            <person name="Leoi L.C.T."/>
            <person name="Lima L.F.A."/>
            <person name="Loureiro M.F."/>
            <person name="Lyra M.C.C.P."/>
            <person name="Madeira H.M.F."/>
            <person name="Manfio G.P."/>
            <person name="Maranhao A.Q."/>
            <person name="Martins W.S."/>
            <person name="di Mauro S.M.Z."/>
            <person name="de Medeiros S.R.B."/>
            <person name="Meissner R.V."/>
            <person name="Moreira M.A.M."/>
            <person name="Nascimento F.F."/>
            <person name="Nicolas M.F."/>
            <person name="Oliveira J.G."/>
            <person name="Oliveira S.C."/>
            <person name="Paixao R.F.C."/>
            <person name="Parente J.A."/>
            <person name="Pedrosa F.O."/>
            <person name="Pena S.D.J."/>
            <person name="Pereira J.O."/>
            <person name="Pereira M."/>
            <person name="Pinto L.S.R.C."/>
            <person name="Pinto L.S."/>
            <person name="Porto J.I.R."/>
            <person name="Potrich D.P."/>
            <person name="Ramalho-Neto C.E."/>
            <person name="Reis A.M.M."/>
            <person name="Rigo L.U."/>
            <person name="Rondinelli E."/>
            <person name="Santos E.B.P."/>
            <person name="Santos F.R."/>
            <person name="Schneider M.P.C."/>
            <person name="Seuanez H.N."/>
            <person name="Silva A.M.R."/>
            <person name="da Silva A.L.C."/>
            <person name="Silva D.W."/>
            <person name="Silva R."/>
            <person name="Simoes I.C."/>
            <person name="Simon D."/>
            <person name="Soares C.M.A."/>
            <person name="Soares R.B.A."/>
            <person name="Souza E.M."/>
            <person name="Souza K.R.L."/>
            <person name="Souza R.C."/>
            <person name="Steffens M.B.R."/>
            <person name="Steindel M."/>
            <person name="Teixeira S.R."/>
            <person name="Urmenyi T."/>
            <person name="Vettore A."/>
            <person name="Wassem R."/>
            <person name="Zaha A."/>
            <person name="Simpson A.J.G."/>
        </authorList>
    </citation>
    <scope>NUCLEOTIDE SEQUENCE [LARGE SCALE GENOMIC DNA]</scope>
    <source>
        <strain>ATCC 12472 / DSM 30191 / JCM 1249 / CCUG 213 / NBRC 12614 / NCIMB 9131 / NCTC 9757 / MK</strain>
    </source>
</reference>
<sequence>MSATERQLQYLRQLVDGARRIAVLTGAGMSTESGIPDFRSADGLWSRDMSLTDAVSVDYFRRDPAAFWRAFRDIFHIKLVGDYQPNDGHRFLAALEASGKEVTILTQNIDGLHGRAGSRRVLELHGTLLTASCPDCRSPHPLDYVQRHELPACRRCGAALKPDVVLYGEAVPLIDVAFQAALNAELLLVMGSSLEVSPVNLIPVEAARAGIPCALINYTPTRFDALFDLCIQAGIGDTCRQLRA</sequence>
<evidence type="ECO:0000255" key="1">
    <source>
        <dbReference type="HAMAP-Rule" id="MF_01968"/>
    </source>
</evidence>
<evidence type="ECO:0000255" key="2">
    <source>
        <dbReference type="PROSITE-ProRule" id="PRU00236"/>
    </source>
</evidence>
<comment type="function">
    <text evidence="1">NAD-dependent protein deacetylase which modulates the activities of several enzymes which are inactive in their acetylated form.</text>
</comment>
<comment type="catalytic activity">
    <reaction evidence="1">
        <text>N(6)-acetyl-L-lysyl-[protein] + NAD(+) + H2O = 2''-O-acetyl-ADP-D-ribose + nicotinamide + L-lysyl-[protein]</text>
        <dbReference type="Rhea" id="RHEA:43636"/>
        <dbReference type="Rhea" id="RHEA-COMP:9752"/>
        <dbReference type="Rhea" id="RHEA-COMP:10731"/>
        <dbReference type="ChEBI" id="CHEBI:15377"/>
        <dbReference type="ChEBI" id="CHEBI:17154"/>
        <dbReference type="ChEBI" id="CHEBI:29969"/>
        <dbReference type="ChEBI" id="CHEBI:57540"/>
        <dbReference type="ChEBI" id="CHEBI:61930"/>
        <dbReference type="ChEBI" id="CHEBI:83767"/>
        <dbReference type="EC" id="2.3.1.286"/>
    </reaction>
</comment>
<comment type="cofactor">
    <cofactor evidence="1">
        <name>Zn(2+)</name>
        <dbReference type="ChEBI" id="CHEBI:29105"/>
    </cofactor>
    <text evidence="1">Binds 1 zinc ion per subunit.</text>
</comment>
<comment type="subcellular location">
    <subcellularLocation>
        <location evidence="1">Cytoplasm</location>
    </subcellularLocation>
</comment>
<comment type="similarity">
    <text evidence="1">Belongs to the sirtuin family. Class U subfamily.</text>
</comment>
<name>NPD_CHRVO</name>